<evidence type="ECO:0000255" key="1">
    <source>
        <dbReference type="HAMAP-Rule" id="MF_00386"/>
    </source>
</evidence>
<evidence type="ECO:0000256" key="2">
    <source>
        <dbReference type="SAM" id="MobiDB-lite"/>
    </source>
</evidence>
<accession>P61475</accession>
<name>YIDD_YERPE</name>
<reference key="1">
    <citation type="journal article" date="2001" name="Nature">
        <title>Genome sequence of Yersinia pestis, the causative agent of plague.</title>
        <authorList>
            <person name="Parkhill J."/>
            <person name="Wren B.W."/>
            <person name="Thomson N.R."/>
            <person name="Titball R.W."/>
            <person name="Holden M.T.G."/>
            <person name="Prentice M.B."/>
            <person name="Sebaihia M."/>
            <person name="James K.D."/>
            <person name="Churcher C.M."/>
            <person name="Mungall K.L."/>
            <person name="Baker S."/>
            <person name="Basham D."/>
            <person name="Bentley S.D."/>
            <person name="Brooks K."/>
            <person name="Cerdeno-Tarraga A.-M."/>
            <person name="Chillingworth T."/>
            <person name="Cronin A."/>
            <person name="Davies R.M."/>
            <person name="Davis P."/>
            <person name="Dougan G."/>
            <person name="Feltwell T."/>
            <person name="Hamlin N."/>
            <person name="Holroyd S."/>
            <person name="Jagels K."/>
            <person name="Karlyshev A.V."/>
            <person name="Leather S."/>
            <person name="Moule S."/>
            <person name="Oyston P.C.F."/>
            <person name="Quail M.A."/>
            <person name="Rutherford K.M."/>
            <person name="Simmonds M."/>
            <person name="Skelton J."/>
            <person name="Stevens K."/>
            <person name="Whitehead S."/>
            <person name="Barrell B.G."/>
        </authorList>
    </citation>
    <scope>NUCLEOTIDE SEQUENCE [LARGE SCALE GENOMIC DNA]</scope>
    <source>
        <strain>CO-92 / Biovar Orientalis</strain>
    </source>
</reference>
<reference key="2">
    <citation type="journal article" date="2002" name="J. Bacteriol.">
        <title>Genome sequence of Yersinia pestis KIM.</title>
        <authorList>
            <person name="Deng W."/>
            <person name="Burland V."/>
            <person name="Plunkett G. III"/>
            <person name="Boutin A."/>
            <person name="Mayhew G.F."/>
            <person name="Liss P."/>
            <person name="Perna N.T."/>
            <person name="Rose D.J."/>
            <person name="Mau B."/>
            <person name="Zhou S."/>
            <person name="Schwartz D.C."/>
            <person name="Fetherston J.D."/>
            <person name="Lindler L.E."/>
            <person name="Brubaker R.R."/>
            <person name="Plano G.V."/>
            <person name="Straley S.C."/>
            <person name="McDonough K.A."/>
            <person name="Nilles M.L."/>
            <person name="Matson J.S."/>
            <person name="Blattner F.R."/>
            <person name="Perry R.D."/>
        </authorList>
    </citation>
    <scope>NUCLEOTIDE SEQUENCE [LARGE SCALE GENOMIC DNA]</scope>
    <source>
        <strain>KIM10+ / Biovar Mediaevalis</strain>
    </source>
</reference>
<reference key="3">
    <citation type="journal article" date="2004" name="DNA Res.">
        <title>Complete genome sequence of Yersinia pestis strain 91001, an isolate avirulent to humans.</title>
        <authorList>
            <person name="Song Y."/>
            <person name="Tong Z."/>
            <person name="Wang J."/>
            <person name="Wang L."/>
            <person name="Guo Z."/>
            <person name="Han Y."/>
            <person name="Zhang J."/>
            <person name="Pei D."/>
            <person name="Zhou D."/>
            <person name="Qin H."/>
            <person name="Pang X."/>
            <person name="Han Y."/>
            <person name="Zhai J."/>
            <person name="Li M."/>
            <person name="Cui B."/>
            <person name="Qi Z."/>
            <person name="Jin L."/>
            <person name="Dai R."/>
            <person name="Chen F."/>
            <person name="Li S."/>
            <person name="Ye C."/>
            <person name="Du Z."/>
            <person name="Lin W."/>
            <person name="Wang J."/>
            <person name="Yu J."/>
            <person name="Yang H."/>
            <person name="Wang J."/>
            <person name="Huang P."/>
            <person name="Yang R."/>
        </authorList>
    </citation>
    <scope>NUCLEOTIDE SEQUENCE [LARGE SCALE GENOMIC DNA]</scope>
    <source>
        <strain>91001 / Biovar Mediaevalis</strain>
    </source>
</reference>
<gene>
    <name type="ordered locus">YPO4101.1</name>
    <name type="ordered locus">y4115.1</name>
    <name type="ordered locus">YP_4008.1</name>
</gene>
<comment type="function">
    <text evidence="1">Could be involved in insertion of integral membrane proteins into the membrane.</text>
</comment>
<comment type="subcellular location">
    <subcellularLocation>
        <location evidence="1">Cell inner membrane</location>
        <topology evidence="1">Peripheral membrane protein</topology>
        <orientation evidence="1">Cytoplasmic side</orientation>
    </subcellularLocation>
</comment>
<comment type="similarity">
    <text evidence="1">Belongs to the UPF0161 family.</text>
</comment>
<dbReference type="EMBL" id="AL590842">
    <property type="status" value="NOT_ANNOTATED_CDS"/>
    <property type="molecule type" value="Genomic_DNA"/>
</dbReference>
<dbReference type="EMBL" id="AE009952">
    <property type="status" value="NOT_ANNOTATED_CDS"/>
    <property type="molecule type" value="Genomic_DNA"/>
</dbReference>
<dbReference type="EMBL" id="AE017042">
    <property type="status" value="NOT_ANNOTATED_CDS"/>
    <property type="molecule type" value="Genomic_DNA"/>
</dbReference>
<dbReference type="PATRIC" id="fig|632.151.peg.2384"/>
<dbReference type="OMA" id="FHPGGHD"/>
<dbReference type="OrthoDB" id="9801753at2"/>
<dbReference type="Proteomes" id="UP000000815">
    <property type="component" value="Chromosome"/>
</dbReference>
<dbReference type="Proteomes" id="UP000001019">
    <property type="component" value="Chromosome"/>
</dbReference>
<dbReference type="Proteomes" id="UP000002490">
    <property type="component" value="Chromosome"/>
</dbReference>
<dbReference type="GO" id="GO:0005886">
    <property type="term" value="C:plasma membrane"/>
    <property type="evidence" value="ECO:0007669"/>
    <property type="project" value="UniProtKB-SubCell"/>
</dbReference>
<dbReference type="HAMAP" id="MF_00386">
    <property type="entry name" value="UPF0161_YidD"/>
    <property type="match status" value="1"/>
</dbReference>
<dbReference type="InterPro" id="IPR002696">
    <property type="entry name" value="Membr_insert_effic_factor_YidD"/>
</dbReference>
<dbReference type="NCBIfam" id="TIGR00278">
    <property type="entry name" value="membrane protein insertion efficiency factor YidD"/>
    <property type="match status" value="1"/>
</dbReference>
<dbReference type="PANTHER" id="PTHR33383">
    <property type="entry name" value="MEMBRANE PROTEIN INSERTION EFFICIENCY FACTOR-RELATED"/>
    <property type="match status" value="1"/>
</dbReference>
<dbReference type="PANTHER" id="PTHR33383:SF1">
    <property type="entry name" value="MEMBRANE PROTEIN INSERTION EFFICIENCY FACTOR-RELATED"/>
    <property type="match status" value="1"/>
</dbReference>
<dbReference type="Pfam" id="PF01809">
    <property type="entry name" value="YidD"/>
    <property type="match status" value="1"/>
</dbReference>
<dbReference type="SMART" id="SM01234">
    <property type="entry name" value="Haemolytic"/>
    <property type="match status" value="1"/>
</dbReference>
<sequence>MASPLSPGSRILIGLIRGYQLVISPLLGPRCRFHPTCSHYGIEALRRFGMIKGSWLTLKRVLKCHPLNSGGDDPVPPKLDDNREH</sequence>
<organism>
    <name type="scientific">Yersinia pestis</name>
    <dbReference type="NCBI Taxonomy" id="632"/>
    <lineage>
        <taxon>Bacteria</taxon>
        <taxon>Pseudomonadati</taxon>
        <taxon>Pseudomonadota</taxon>
        <taxon>Gammaproteobacteria</taxon>
        <taxon>Enterobacterales</taxon>
        <taxon>Yersiniaceae</taxon>
        <taxon>Yersinia</taxon>
    </lineage>
</organism>
<protein>
    <recommendedName>
        <fullName evidence="1">Putative membrane protein insertion efficiency factor</fullName>
    </recommendedName>
</protein>
<feature type="chain" id="PRO_0000171901" description="Putative membrane protein insertion efficiency factor">
    <location>
        <begin position="1"/>
        <end position="85"/>
    </location>
</feature>
<feature type="region of interest" description="Disordered" evidence="2">
    <location>
        <begin position="66"/>
        <end position="85"/>
    </location>
</feature>
<proteinExistence type="inferred from homology"/>
<keyword id="KW-0997">Cell inner membrane</keyword>
<keyword id="KW-1003">Cell membrane</keyword>
<keyword id="KW-0472">Membrane</keyword>
<keyword id="KW-1185">Reference proteome</keyword>